<reference key="1">
    <citation type="journal article" date="2007" name="Nat. Biotechnol.">
        <title>Comparative analysis of the complete genome sequence of the plant growth-promoting bacterium Bacillus amyloliquefaciens FZB42.</title>
        <authorList>
            <person name="Chen X.H."/>
            <person name="Koumoutsi A."/>
            <person name="Scholz R."/>
            <person name="Eisenreich A."/>
            <person name="Schneider K."/>
            <person name="Heinemeyer I."/>
            <person name="Morgenstern B."/>
            <person name="Voss B."/>
            <person name="Hess W.R."/>
            <person name="Reva O."/>
            <person name="Junge H."/>
            <person name="Voigt B."/>
            <person name="Jungblut P.R."/>
            <person name="Vater J."/>
            <person name="Suessmuth R."/>
            <person name="Liesegang H."/>
            <person name="Strittmatter A."/>
            <person name="Gottschalk G."/>
            <person name="Borriss R."/>
        </authorList>
    </citation>
    <scope>NUCLEOTIDE SEQUENCE [LARGE SCALE GENOMIC DNA]</scope>
    <source>
        <strain>DSM 23117 / BGSC 10A6 / LMG 26770 / FZB42</strain>
    </source>
</reference>
<feature type="chain" id="PRO_1000024421" description="Bis(5'-nucleosyl)-tetraphosphatase PrpE [asymmetrical]">
    <location>
        <begin position="1"/>
        <end position="249"/>
    </location>
</feature>
<organism>
    <name type="scientific">Bacillus velezensis (strain DSM 23117 / BGSC 10A6 / LMG 26770 / FZB42)</name>
    <name type="common">Bacillus amyloliquefaciens subsp. plantarum</name>
    <dbReference type="NCBI Taxonomy" id="326423"/>
    <lineage>
        <taxon>Bacteria</taxon>
        <taxon>Bacillati</taxon>
        <taxon>Bacillota</taxon>
        <taxon>Bacilli</taxon>
        <taxon>Bacillales</taxon>
        <taxon>Bacillaceae</taxon>
        <taxon>Bacillus</taxon>
        <taxon>Bacillus amyloliquefaciens group</taxon>
    </lineage>
</organism>
<keyword id="KW-0342">GTP-binding</keyword>
<keyword id="KW-0378">Hydrolase</keyword>
<keyword id="KW-0533">Nickel</keyword>
<keyword id="KW-0547">Nucleotide-binding</keyword>
<name>PRPE_BACVZ</name>
<proteinExistence type="inferred from homology"/>
<accession>A7Z3F2</accession>
<evidence type="ECO:0000255" key="1">
    <source>
        <dbReference type="HAMAP-Rule" id="MF_01443"/>
    </source>
</evidence>
<comment type="function">
    <text evidence="1">Asymmetrically hydrolyzes Ap4p to yield AMP and ATP.</text>
</comment>
<comment type="catalytic activity">
    <reaction evidence="1">
        <text>P(1),P(4)-bis(5'-guanosyl) tetraphosphate + H2O = GMP + GTP + 2 H(+)</text>
        <dbReference type="Rhea" id="RHEA:22484"/>
        <dbReference type="ChEBI" id="CHEBI:15377"/>
        <dbReference type="ChEBI" id="CHEBI:15378"/>
        <dbReference type="ChEBI" id="CHEBI:37565"/>
        <dbReference type="ChEBI" id="CHEBI:57553"/>
        <dbReference type="ChEBI" id="CHEBI:58115"/>
        <dbReference type="EC" id="3.6.1.17"/>
    </reaction>
</comment>
<comment type="cofactor">
    <cofactor evidence="1">
        <name>Ni(2+)</name>
        <dbReference type="ChEBI" id="CHEBI:49786"/>
    </cofactor>
</comment>
<comment type="similarity">
    <text evidence="1">Belongs to the PrpE family.</text>
</comment>
<dbReference type="EC" id="3.6.1.17" evidence="1"/>
<dbReference type="EMBL" id="CP000560">
    <property type="protein sequence ID" value="ABS73528.1"/>
    <property type="molecule type" value="Genomic_DNA"/>
</dbReference>
<dbReference type="RefSeq" id="WP_012117293.1">
    <property type="nucleotide sequence ID" value="NC_009725.2"/>
</dbReference>
<dbReference type="SMR" id="A7Z3F2"/>
<dbReference type="GeneID" id="93080300"/>
<dbReference type="KEGG" id="bay:RBAM_011640"/>
<dbReference type="HOGENOM" id="CLU_023125_3_0_9"/>
<dbReference type="Proteomes" id="UP000001120">
    <property type="component" value="Chromosome"/>
</dbReference>
<dbReference type="GO" id="GO:0005737">
    <property type="term" value="C:cytoplasm"/>
    <property type="evidence" value="ECO:0007669"/>
    <property type="project" value="TreeGrafter"/>
</dbReference>
<dbReference type="GO" id="GO:0004081">
    <property type="term" value="F:bis(5'-nucleosyl)-tetraphosphatase (asymmetrical) activity"/>
    <property type="evidence" value="ECO:0007669"/>
    <property type="project" value="UniProtKB-UniRule"/>
</dbReference>
<dbReference type="GO" id="GO:0005525">
    <property type="term" value="F:GTP binding"/>
    <property type="evidence" value="ECO:0007669"/>
    <property type="project" value="UniProtKB-KW"/>
</dbReference>
<dbReference type="GO" id="GO:0016151">
    <property type="term" value="F:nickel cation binding"/>
    <property type="evidence" value="ECO:0007669"/>
    <property type="project" value="UniProtKB-UniRule"/>
</dbReference>
<dbReference type="GO" id="GO:0016791">
    <property type="term" value="F:phosphatase activity"/>
    <property type="evidence" value="ECO:0007669"/>
    <property type="project" value="TreeGrafter"/>
</dbReference>
<dbReference type="CDD" id="cd07423">
    <property type="entry name" value="MPP_Prp_like"/>
    <property type="match status" value="1"/>
</dbReference>
<dbReference type="Gene3D" id="3.60.21.10">
    <property type="match status" value="1"/>
</dbReference>
<dbReference type="HAMAP" id="MF_01443">
    <property type="entry name" value="PrpE"/>
    <property type="match status" value="1"/>
</dbReference>
<dbReference type="InterPro" id="IPR050126">
    <property type="entry name" value="Ap4A_hydrolase"/>
</dbReference>
<dbReference type="InterPro" id="IPR023937">
    <property type="entry name" value="Bis(5'-nucleosyl)-tetraP_PrpE"/>
</dbReference>
<dbReference type="InterPro" id="IPR004843">
    <property type="entry name" value="Calcineurin-like_PHP_ApaH"/>
</dbReference>
<dbReference type="InterPro" id="IPR029052">
    <property type="entry name" value="Metallo-depent_PP-like"/>
</dbReference>
<dbReference type="InterPro" id="IPR041780">
    <property type="entry name" value="MPP_PrpE-like"/>
</dbReference>
<dbReference type="NCBIfam" id="NF010148">
    <property type="entry name" value="PRK13625.1"/>
    <property type="match status" value="1"/>
</dbReference>
<dbReference type="PANTHER" id="PTHR42850:SF7">
    <property type="entry name" value="BIS(5'-NUCLEOSYL)-TETRAPHOSPHATASE PRPE [ASYMMETRICAL]"/>
    <property type="match status" value="1"/>
</dbReference>
<dbReference type="PANTHER" id="PTHR42850">
    <property type="entry name" value="METALLOPHOSPHOESTERASE"/>
    <property type="match status" value="1"/>
</dbReference>
<dbReference type="Pfam" id="PF00149">
    <property type="entry name" value="Metallophos"/>
    <property type="match status" value="1"/>
</dbReference>
<dbReference type="SUPFAM" id="SSF56300">
    <property type="entry name" value="Metallo-dependent phosphatases"/>
    <property type="match status" value="1"/>
</dbReference>
<sequence>MAYDIISDIHGCYDEMIALMQKLGYEVKDGTPVHSEDRTLVFAGDLTDRGPKSVEVMRFVAKAYEKGAVRYVPGNHCNKLYRYLKGNPVKVMHGLETTAAELKELSPADRTEVSRQFIRLYESAPLYDILHNGDLVVAHAGIKADDIGKYSRKVKEFVLYGDITGETHPDGRPVRRDWAAAYEGKAWIVYGHTPVKRPRIVNRTINIDTGCVFGNQLTGFRFPEHETVSVESSMPYDASRFREDHGRQA</sequence>
<gene>
    <name evidence="1" type="primary">prpE</name>
    <name type="ordered locus">RBAM_011640</name>
</gene>
<protein>
    <recommendedName>
        <fullName evidence="1">Bis(5'-nucleosyl)-tetraphosphatase PrpE [asymmetrical]</fullName>
        <ecNumber evidence="1">3.6.1.17</ecNumber>
    </recommendedName>
    <alternativeName>
        <fullName evidence="1">Ap4A hydrolase</fullName>
    </alternativeName>
    <alternativeName>
        <fullName evidence="1">Diadenosine 5',5'''-P1,P4-tetraphosphate asymmetrical hydrolase</fullName>
        <shortName evidence="1">Diadenosine tetraphosphatase</shortName>
    </alternativeName>
</protein>